<reference key="1">
    <citation type="journal article" date="2010" name="BMC Genomics">
        <title>Whole genome assembly of a natto production strain Bacillus subtilis natto from very short read data.</title>
        <authorList>
            <person name="Nishito Y."/>
            <person name="Osana Y."/>
            <person name="Hachiya T."/>
            <person name="Popendorf K."/>
            <person name="Toyoda A."/>
            <person name="Fujiyama A."/>
            <person name="Itaya M."/>
            <person name="Sakakibara Y."/>
        </authorList>
    </citation>
    <scope>NUCLEOTIDE SEQUENCE [LARGE SCALE GENOMIC DNA]</scope>
    <source>
        <strain>BEST195</strain>
    </source>
</reference>
<reference key="2">
    <citation type="journal article" date="2014" name="PLoS ONE">
        <title>Whole genome complete resequencing of Bacillus subtilis natto by combining long reads with high-quality short reads.</title>
        <authorList>
            <person name="Kamada M."/>
            <person name="Hase S."/>
            <person name="Sato K."/>
            <person name="Toyoda A."/>
            <person name="Fujiyama A."/>
            <person name="Sakakibara Y."/>
        </authorList>
    </citation>
    <scope>GENOME REANNOTATION</scope>
    <source>
        <strain>BEST195</strain>
    </source>
</reference>
<reference key="3">
    <citation type="journal article" date="2015" name="Biosci. Biotechnol. Biochem.">
        <title>Identification of a quorum sensing pheromone posttranslationally farnesylated at the internal tryptophan residue from Bacillus subtilis subsp. natto.</title>
        <authorList>
            <person name="Hayashi S."/>
            <person name="Usami S."/>
            <person name="Nakamura Y."/>
            <person name="Ozaki K."/>
            <person name="Okada M."/>
        </authorList>
    </citation>
    <scope>FUNCTION</scope>
    <scope>ISOPRENYLATION AT TRP-54</scope>
    <scope>IDENTIFICATION BY MASS SPECTROMETRY</scope>
</reference>
<reference key="4">
    <citation type="journal article" date="2015" name="Bioorg. Med. Chem. Lett.">
        <title>Chemical structure and biological activity of a quorum sensing pheromone from Bacillus subtilis subsp. natto.</title>
        <authorList>
            <person name="Okada M."/>
            <person name="Nakamura Y."/>
            <person name="Hayashi S."/>
            <person name="Ozaki K."/>
            <person name="Usami S."/>
        </authorList>
    </citation>
    <scope>FUNCTION</scope>
    <scope>ISOPRENYLATION AT TRP-54</scope>
    <scope>IDENTIFICATION BY MASS SPECTROMETRY</scope>
</reference>
<reference key="5">
    <citation type="journal article" date="2018" name="ChemBioChem">
        <title>A tryptophan prenyltransferase with broad substrate tolerance from Bacillus subtilis subsp. natto.</title>
        <authorList>
            <person name="Sugita T."/>
            <person name="Okada M."/>
            <person name="Nakashima Y."/>
            <person name="Tian T."/>
            <person name="Abe I."/>
        </authorList>
    </citation>
    <scope>FUNCTION</scope>
    <scope>ISOPRENYLATION AT TRP-54</scope>
    <scope>IDENTIFICATION BY MASS SPECTROMETRY</scope>
</reference>
<accession>D4G0R3</accession>
<sequence>MKHIDKIISHLVNNPEAFDQFKNGNLTLLNINEKEKKAILYAFEQGEVPRTSKWPPIEAISNFFEDDKRKSLI</sequence>
<feature type="propeptide" id="PRO_0000454310" evidence="2 4">
    <location>
        <begin position="1"/>
        <end position="52"/>
    </location>
</feature>
<feature type="peptide" id="PRO_0000454311" description="ComX pheromone" evidence="2 4">
    <location>
        <begin position="53"/>
        <end position="58"/>
    </location>
</feature>
<feature type="propeptide" id="PRO_0000454312" evidence="2 4">
    <location>
        <begin position="59"/>
        <end position="73"/>
    </location>
</feature>
<feature type="lipid moiety-binding region" description="3'-farnesyl-2',N2-cyclotryptophan" evidence="2 3 4">
    <location>
        <position position="54"/>
    </location>
</feature>
<protein>
    <recommendedName>
        <fullName evidence="5">ComX pheromone</fullName>
    </recommendedName>
    <alternativeName>
        <fullName evidence="7">Competence pheromone</fullName>
    </alternativeName>
</protein>
<keyword id="KW-0178">Competence</keyword>
<keyword id="KW-0449">Lipoprotein</keyword>
<keyword id="KW-0588">Pheromone</keyword>
<keyword id="KW-0636">Prenylation</keyword>
<keyword id="KW-0964">Secreted</keyword>
<name>COMX_BACNB</name>
<evidence type="ECO:0000250" key="1">
    <source>
        <dbReference type="UniProtKB" id="P45453"/>
    </source>
</evidence>
<evidence type="ECO:0000269" key="2">
    <source>
    </source>
</evidence>
<evidence type="ECO:0000269" key="3">
    <source>
    </source>
</evidence>
<evidence type="ECO:0000269" key="4">
    <source>
    </source>
</evidence>
<evidence type="ECO:0000303" key="5">
    <source>
    </source>
</evidence>
<evidence type="ECO:0000303" key="6">
    <source>
    </source>
</evidence>
<evidence type="ECO:0000305" key="7"/>
<evidence type="ECO:0000312" key="8">
    <source>
        <dbReference type="EMBL" id="BAI86694.1"/>
    </source>
</evidence>
<proteinExistence type="evidence at protein level"/>
<organism>
    <name type="scientific">Bacillus subtilis subsp. natto (strain BEST195)</name>
    <dbReference type="NCBI Taxonomy" id="645657"/>
    <lineage>
        <taxon>Bacteria</taxon>
        <taxon>Bacillati</taxon>
        <taxon>Bacillota</taxon>
        <taxon>Bacilli</taxon>
        <taxon>Bacillales</taxon>
        <taxon>Bacillaceae</taxon>
        <taxon>Bacillus</taxon>
    </lineage>
</organism>
<comment type="function">
    <text evidence="1 2 3 4">Part of a major quorum-sensing system that regulates the development of genetic competence (PubMed:25855042, PubMed:26276536, PubMed:29665236). Acts through the activation of the two-component regulatory system ComP/ComA composed of a sensor histidine kinase, ComP, and a response regulator, ComA (By similarity). Activates the expression of the genes for biosynthesis of poly-gamma-glutamic acid (gamma-PGA), which is involved in biofilm formation in B.subtilis natto (PubMed:25855042, PubMed:26276536).</text>
</comment>
<comment type="subunit">
    <text evidence="1">Interacts directly with the sensor histidine kinase ComP and stimulates its activity.</text>
</comment>
<comment type="subcellular location">
    <subcellularLocation>
        <location evidence="1">Secreted</location>
    </subcellularLocation>
</comment>
<comment type="PTM">
    <text evidence="2 3 4">Trp-54 is modified by farnesylation, which is essential for activity (PubMed:25855042, PubMed:26276536, PubMed:29665236). Modified by the tryptophan prenyltransferase ComQ before export to the extracellular environment (PubMed:25855042, PubMed:29665236).</text>
</comment>
<dbReference type="EMBL" id="AP011541">
    <property type="protein sequence ID" value="BAI86694.1"/>
    <property type="molecule type" value="Genomic_DNA"/>
</dbReference>
<dbReference type="RefSeq" id="WP_014480704.1">
    <property type="nucleotide sequence ID" value="NC_017196.2"/>
</dbReference>
<dbReference type="SMR" id="D4G0R3"/>
<dbReference type="STRING" id="86029.AWV81_16290"/>
<dbReference type="KEGG" id="bso:BSNT_09633"/>
<dbReference type="PATRIC" id="fig|645657.3.peg.4099"/>
<dbReference type="HOGENOM" id="CLU_2696611_0_0_9"/>
<dbReference type="GO" id="GO:0005576">
    <property type="term" value="C:extracellular region"/>
    <property type="evidence" value="ECO:0007669"/>
    <property type="project" value="UniProtKB-SubCell"/>
</dbReference>
<dbReference type="GO" id="GO:0005186">
    <property type="term" value="F:pheromone activity"/>
    <property type="evidence" value="ECO:0007669"/>
    <property type="project" value="UniProtKB-KW"/>
</dbReference>
<dbReference type="GO" id="GO:0030420">
    <property type="term" value="P:establishment of competence for transformation"/>
    <property type="evidence" value="ECO:0007669"/>
    <property type="project" value="UniProtKB-KW"/>
</dbReference>
<dbReference type="InterPro" id="IPR009233">
    <property type="entry name" value="Competence_ComX_Bacillus"/>
</dbReference>
<dbReference type="Pfam" id="PF05952">
    <property type="entry name" value="ComX"/>
    <property type="match status" value="1"/>
</dbReference>
<gene>
    <name evidence="6" type="primary">comX</name>
    <name evidence="8" type="ORF">BSNT_09633</name>
</gene>